<feature type="chain" id="PRO_0000211817" description="Probable ribosomal RNA small subunit methyltransferase B">
    <location>
        <begin position="1"/>
        <end position="446"/>
    </location>
</feature>
<feature type="active site" description="Nucleophile" evidence="2">
    <location>
        <position position="383"/>
    </location>
</feature>
<feature type="binding site" evidence="2">
    <location>
        <begin position="260"/>
        <end position="266"/>
    </location>
    <ligand>
        <name>S-adenosyl-L-methionine</name>
        <dbReference type="ChEBI" id="CHEBI:59789"/>
    </ligand>
</feature>
<feature type="binding site" evidence="2">
    <location>
        <position position="284"/>
    </location>
    <ligand>
        <name>S-adenosyl-L-methionine</name>
        <dbReference type="ChEBI" id="CHEBI:59789"/>
    </ligand>
</feature>
<feature type="binding site" evidence="2">
    <location>
        <position position="311"/>
    </location>
    <ligand>
        <name>S-adenosyl-L-methionine</name>
        <dbReference type="ChEBI" id="CHEBI:59789"/>
    </ligand>
</feature>
<feature type="binding site" evidence="2">
    <location>
        <position position="330"/>
    </location>
    <ligand>
        <name>S-adenosyl-L-methionine</name>
        <dbReference type="ChEBI" id="CHEBI:59789"/>
    </ligand>
</feature>
<sequence>MISARQLAFLILRDINRRDSYTDVAIDRALQKHPLSPPDRRFCTELVYGVVRRQRTLDCLIEQLGDRPIGKQPPDLRRIVQLGLYQLRYLDQVPASAAVNTGVDLAKANGLKGLSKVVNGMLRRYQRAEEQGKNILDQEKISLGEQYSFPDWLMELFEQTWGKAETESLCAYFNQNPSLDLRINPLKTSRVEVAQSLAELNLTTTAMAGLPQGLRLGGKTGAITQLPGFAEGWWTVQDASAQWVAQILNPQPEETIFDVCAAPGGKTTHIAELMGDQGQIYAGDRHGWRLQKLAVTQQRLGLTSIKIWEGDLTQPGVKPPVELVDRALLDVPCSGLGTLHRNPDLRWRQTPATIATLLPLQQALLKAIAPLVKSGGTLVYSTCTLNPAENEAQIERFLQDHEDWRSEPFEWTSPQGQTNSVTSGMLTILPHHHHQDGFFIANLKKA</sequence>
<evidence type="ECO:0000250" key="1">
    <source>
        <dbReference type="UniProtKB" id="P36929"/>
    </source>
</evidence>
<evidence type="ECO:0000255" key="2">
    <source>
        <dbReference type="PROSITE-ProRule" id="PRU01023"/>
    </source>
</evidence>
<evidence type="ECO:0000305" key="3"/>
<proteinExistence type="inferred from homology"/>
<reference key="1">
    <citation type="journal article" date="1996" name="DNA Res.">
        <title>Sequence analysis of the genome of the unicellular cyanobacterium Synechocystis sp. strain PCC6803. II. Sequence determination of the entire genome and assignment of potential protein-coding regions.</title>
        <authorList>
            <person name="Kaneko T."/>
            <person name="Sato S."/>
            <person name="Kotani H."/>
            <person name="Tanaka A."/>
            <person name="Asamizu E."/>
            <person name="Nakamura Y."/>
            <person name="Miyajima N."/>
            <person name="Hirosawa M."/>
            <person name="Sugiura M."/>
            <person name="Sasamoto S."/>
            <person name="Kimura T."/>
            <person name="Hosouchi T."/>
            <person name="Matsuno A."/>
            <person name="Muraki A."/>
            <person name="Nakazaki N."/>
            <person name="Naruo K."/>
            <person name="Okumura S."/>
            <person name="Shimpo S."/>
            <person name="Takeuchi C."/>
            <person name="Wada T."/>
            <person name="Watanabe A."/>
            <person name="Yamada M."/>
            <person name="Yasuda M."/>
            <person name="Tabata S."/>
        </authorList>
    </citation>
    <scope>NUCLEOTIDE SEQUENCE [LARGE SCALE GENOMIC DNA]</scope>
    <source>
        <strain>ATCC 27184 / PCC 6803 / Kazusa</strain>
    </source>
</reference>
<accession>P72943</accession>
<name>RSMB_SYNY3</name>
<gene>
    <name evidence="1" type="primary">rsmB</name>
    <name type="synonym">sun</name>
    <name type="ordered locus">slr0679</name>
</gene>
<comment type="function">
    <text evidence="1">Specifically methylates the cytosine at position 967 (m5C967) of 16S rRNA.</text>
</comment>
<comment type="catalytic activity">
    <reaction evidence="1">
        <text>cytidine(967) in 16S rRNA + S-adenosyl-L-methionine = 5-methylcytidine(967) in 16S rRNA + S-adenosyl-L-homocysteine + H(+)</text>
        <dbReference type="Rhea" id="RHEA:42748"/>
        <dbReference type="Rhea" id="RHEA-COMP:10219"/>
        <dbReference type="Rhea" id="RHEA-COMP:10220"/>
        <dbReference type="ChEBI" id="CHEBI:15378"/>
        <dbReference type="ChEBI" id="CHEBI:57856"/>
        <dbReference type="ChEBI" id="CHEBI:59789"/>
        <dbReference type="ChEBI" id="CHEBI:74483"/>
        <dbReference type="ChEBI" id="CHEBI:82748"/>
        <dbReference type="EC" id="2.1.1.176"/>
    </reaction>
</comment>
<comment type="subcellular location">
    <subcellularLocation>
        <location evidence="1">Cytoplasm</location>
    </subcellularLocation>
</comment>
<comment type="similarity">
    <text evidence="2">Belongs to the class I-like SAM-binding methyltransferase superfamily. RsmB/NOP family.</text>
</comment>
<protein>
    <recommendedName>
        <fullName evidence="3">Probable ribosomal RNA small subunit methyltransferase B</fullName>
        <ecNumber evidence="1">2.1.1.176</ecNumber>
    </recommendedName>
    <alternativeName>
        <fullName evidence="1">16S rRNA m5C967 methyltransferase</fullName>
    </alternativeName>
    <alternativeName>
        <fullName evidence="1">rRNA (cytosine-C(5)-)-methyltransferase RsmB</fullName>
    </alternativeName>
</protein>
<keyword id="KW-0963">Cytoplasm</keyword>
<keyword id="KW-0489">Methyltransferase</keyword>
<keyword id="KW-1185">Reference proteome</keyword>
<keyword id="KW-0690">Ribosome biogenesis</keyword>
<keyword id="KW-0694">RNA-binding</keyword>
<keyword id="KW-0698">rRNA processing</keyword>
<keyword id="KW-0949">S-adenosyl-L-methionine</keyword>
<keyword id="KW-0808">Transferase</keyword>
<dbReference type="EC" id="2.1.1.176" evidence="1"/>
<dbReference type="EMBL" id="BA000022">
    <property type="protein sequence ID" value="BAA16960.1"/>
    <property type="molecule type" value="Genomic_DNA"/>
</dbReference>
<dbReference type="PIR" id="S74920">
    <property type="entry name" value="S74920"/>
</dbReference>
<dbReference type="SMR" id="P72943"/>
<dbReference type="FunCoup" id="P72943">
    <property type="interactions" value="453"/>
</dbReference>
<dbReference type="IntAct" id="P72943">
    <property type="interactions" value="5"/>
</dbReference>
<dbReference type="STRING" id="1148.gene:10497820"/>
<dbReference type="PaxDb" id="1148-1652035"/>
<dbReference type="EnsemblBacteria" id="BAA16960">
    <property type="protein sequence ID" value="BAA16960"/>
    <property type="gene ID" value="BAA16960"/>
</dbReference>
<dbReference type="KEGG" id="syn:slr0679"/>
<dbReference type="eggNOG" id="COG0144">
    <property type="taxonomic scope" value="Bacteria"/>
</dbReference>
<dbReference type="eggNOG" id="COG0781">
    <property type="taxonomic scope" value="Bacteria"/>
</dbReference>
<dbReference type="InParanoid" id="P72943"/>
<dbReference type="PhylomeDB" id="P72943"/>
<dbReference type="Proteomes" id="UP000001425">
    <property type="component" value="Chromosome"/>
</dbReference>
<dbReference type="GO" id="GO:0005737">
    <property type="term" value="C:cytoplasm"/>
    <property type="evidence" value="ECO:0007669"/>
    <property type="project" value="UniProtKB-SubCell"/>
</dbReference>
<dbReference type="GO" id="GO:0003723">
    <property type="term" value="F:RNA binding"/>
    <property type="evidence" value="ECO:0007669"/>
    <property type="project" value="UniProtKB-KW"/>
</dbReference>
<dbReference type="GO" id="GO:0008649">
    <property type="term" value="F:rRNA methyltransferase activity"/>
    <property type="evidence" value="ECO:0007669"/>
    <property type="project" value="InterPro"/>
</dbReference>
<dbReference type="GO" id="GO:0006355">
    <property type="term" value="P:regulation of DNA-templated transcription"/>
    <property type="evidence" value="ECO:0007669"/>
    <property type="project" value="InterPro"/>
</dbReference>
<dbReference type="GO" id="GO:0001510">
    <property type="term" value="P:RNA methylation"/>
    <property type="evidence" value="ECO:0000318"/>
    <property type="project" value="GO_Central"/>
</dbReference>
<dbReference type="CDD" id="cd02440">
    <property type="entry name" value="AdoMet_MTases"/>
    <property type="match status" value="1"/>
</dbReference>
<dbReference type="CDD" id="cd00620">
    <property type="entry name" value="Methyltransferase_Sun"/>
    <property type="match status" value="1"/>
</dbReference>
<dbReference type="FunFam" id="3.40.50.150:FF:000257">
    <property type="entry name" value="16S rRNA methyltransferase"/>
    <property type="match status" value="1"/>
</dbReference>
<dbReference type="Gene3D" id="1.10.940.10">
    <property type="entry name" value="NusB-like"/>
    <property type="match status" value="1"/>
</dbReference>
<dbReference type="Gene3D" id="3.40.50.150">
    <property type="entry name" value="Vaccinia Virus protein VP39"/>
    <property type="match status" value="1"/>
</dbReference>
<dbReference type="InterPro" id="IPR049560">
    <property type="entry name" value="MeTrfase_RsmB-F_NOP2_cat"/>
</dbReference>
<dbReference type="InterPro" id="IPR001678">
    <property type="entry name" value="MeTrfase_RsmB-F_NOP2_dom"/>
</dbReference>
<dbReference type="InterPro" id="IPR035926">
    <property type="entry name" value="NusB-like_sf"/>
</dbReference>
<dbReference type="InterPro" id="IPR006027">
    <property type="entry name" value="NusB_RsmB_TIM44"/>
</dbReference>
<dbReference type="InterPro" id="IPR023267">
    <property type="entry name" value="RCMT"/>
</dbReference>
<dbReference type="InterPro" id="IPR004573">
    <property type="entry name" value="rRNA_ssu_MeTfrase_B"/>
</dbReference>
<dbReference type="InterPro" id="IPR054728">
    <property type="entry name" value="RsmB-like_ferredoxin"/>
</dbReference>
<dbReference type="InterPro" id="IPR048019">
    <property type="entry name" value="RsmB-like_N"/>
</dbReference>
<dbReference type="InterPro" id="IPR018314">
    <property type="entry name" value="RsmB/NOL1/NOP2-like_CS"/>
</dbReference>
<dbReference type="InterPro" id="IPR029063">
    <property type="entry name" value="SAM-dependent_MTases_sf"/>
</dbReference>
<dbReference type="NCBIfam" id="NF011493">
    <property type="entry name" value="PRK14901.1"/>
    <property type="match status" value="1"/>
</dbReference>
<dbReference type="NCBIfam" id="NF011494">
    <property type="entry name" value="PRK14902.1"/>
    <property type="match status" value="1"/>
</dbReference>
<dbReference type="NCBIfam" id="TIGR00563">
    <property type="entry name" value="rsmB"/>
    <property type="match status" value="1"/>
</dbReference>
<dbReference type="PANTHER" id="PTHR22807">
    <property type="entry name" value="NOP2 YEAST -RELATED NOL1/NOP2/FMU SUN DOMAIN-CONTAINING"/>
    <property type="match status" value="1"/>
</dbReference>
<dbReference type="PANTHER" id="PTHR22807:SF53">
    <property type="entry name" value="RIBOSOMAL RNA SMALL SUBUNIT METHYLTRANSFERASE B-RELATED"/>
    <property type="match status" value="1"/>
</dbReference>
<dbReference type="Pfam" id="PF01189">
    <property type="entry name" value="Methyltr_RsmB-F"/>
    <property type="match status" value="1"/>
</dbReference>
<dbReference type="Pfam" id="PF01029">
    <property type="entry name" value="NusB"/>
    <property type="match status" value="1"/>
</dbReference>
<dbReference type="Pfam" id="PF22458">
    <property type="entry name" value="RsmF-B_ferredox"/>
    <property type="match status" value="1"/>
</dbReference>
<dbReference type="PRINTS" id="PR02008">
    <property type="entry name" value="RCMTFAMILY"/>
</dbReference>
<dbReference type="SUPFAM" id="SSF48013">
    <property type="entry name" value="NusB-like"/>
    <property type="match status" value="1"/>
</dbReference>
<dbReference type="SUPFAM" id="SSF53335">
    <property type="entry name" value="S-adenosyl-L-methionine-dependent methyltransferases"/>
    <property type="match status" value="1"/>
</dbReference>
<dbReference type="PROSITE" id="PS01153">
    <property type="entry name" value="NOL1_NOP2_SUN"/>
    <property type="match status" value="1"/>
</dbReference>
<dbReference type="PROSITE" id="PS51686">
    <property type="entry name" value="SAM_MT_RSMB_NOP"/>
    <property type="match status" value="1"/>
</dbReference>
<organism>
    <name type="scientific">Synechocystis sp. (strain ATCC 27184 / PCC 6803 / Kazusa)</name>
    <dbReference type="NCBI Taxonomy" id="1111708"/>
    <lineage>
        <taxon>Bacteria</taxon>
        <taxon>Bacillati</taxon>
        <taxon>Cyanobacteriota</taxon>
        <taxon>Cyanophyceae</taxon>
        <taxon>Synechococcales</taxon>
        <taxon>Merismopediaceae</taxon>
        <taxon>Synechocystis</taxon>
    </lineage>
</organism>